<gene>
    <name evidence="1" type="primary">rpmF</name>
    <name type="ordered locus">BT_3833</name>
</gene>
<accession>Q8A138</accession>
<dbReference type="EMBL" id="AE015928">
    <property type="protein sequence ID" value="AAO78938.1"/>
    <property type="molecule type" value="Genomic_DNA"/>
</dbReference>
<dbReference type="RefSeq" id="NP_812744.1">
    <property type="nucleotide sequence ID" value="NC_004663.1"/>
</dbReference>
<dbReference type="RefSeq" id="WP_002562387.1">
    <property type="nucleotide sequence ID" value="NZ_UYXG01000011.1"/>
</dbReference>
<dbReference type="SMR" id="Q8A138"/>
<dbReference type="STRING" id="226186.BT_3833"/>
<dbReference type="PaxDb" id="226186-BT_3833"/>
<dbReference type="EnsemblBacteria" id="AAO78938">
    <property type="protein sequence ID" value="AAO78938"/>
    <property type="gene ID" value="BT_3833"/>
</dbReference>
<dbReference type="GeneID" id="94549558"/>
<dbReference type="KEGG" id="bth:BT_3833"/>
<dbReference type="PATRIC" id="fig|226186.12.peg.3897"/>
<dbReference type="eggNOG" id="COG0333">
    <property type="taxonomic scope" value="Bacteria"/>
</dbReference>
<dbReference type="HOGENOM" id="CLU_129084_1_3_10"/>
<dbReference type="InParanoid" id="Q8A138"/>
<dbReference type="OrthoDB" id="9812874at2"/>
<dbReference type="Proteomes" id="UP000001414">
    <property type="component" value="Chromosome"/>
</dbReference>
<dbReference type="GO" id="GO:0022625">
    <property type="term" value="C:cytosolic large ribosomal subunit"/>
    <property type="evidence" value="ECO:0000318"/>
    <property type="project" value="GO_Central"/>
</dbReference>
<dbReference type="GO" id="GO:0003735">
    <property type="term" value="F:structural constituent of ribosome"/>
    <property type="evidence" value="ECO:0000318"/>
    <property type="project" value="GO_Central"/>
</dbReference>
<dbReference type="GO" id="GO:0006412">
    <property type="term" value="P:translation"/>
    <property type="evidence" value="ECO:0007669"/>
    <property type="project" value="UniProtKB-UniRule"/>
</dbReference>
<dbReference type="HAMAP" id="MF_00340">
    <property type="entry name" value="Ribosomal_bL32"/>
    <property type="match status" value="1"/>
</dbReference>
<dbReference type="InterPro" id="IPR002677">
    <property type="entry name" value="Ribosomal_bL32"/>
</dbReference>
<dbReference type="InterPro" id="IPR044957">
    <property type="entry name" value="Ribosomal_bL32_bact"/>
</dbReference>
<dbReference type="InterPro" id="IPR011332">
    <property type="entry name" value="Ribosomal_zn-bd"/>
</dbReference>
<dbReference type="NCBIfam" id="TIGR01031">
    <property type="entry name" value="rpmF_bact"/>
    <property type="match status" value="1"/>
</dbReference>
<dbReference type="PANTHER" id="PTHR35534">
    <property type="entry name" value="50S RIBOSOMAL PROTEIN L32"/>
    <property type="match status" value="1"/>
</dbReference>
<dbReference type="PANTHER" id="PTHR35534:SF1">
    <property type="entry name" value="LARGE RIBOSOMAL SUBUNIT PROTEIN BL32"/>
    <property type="match status" value="1"/>
</dbReference>
<dbReference type="Pfam" id="PF01783">
    <property type="entry name" value="Ribosomal_L32p"/>
    <property type="match status" value="1"/>
</dbReference>
<dbReference type="SUPFAM" id="SSF57829">
    <property type="entry name" value="Zn-binding ribosomal proteins"/>
    <property type="match status" value="1"/>
</dbReference>
<protein>
    <recommendedName>
        <fullName evidence="1">Large ribosomal subunit protein bL32</fullName>
    </recommendedName>
    <alternativeName>
        <fullName evidence="3">50S ribosomal protein L32</fullName>
    </alternativeName>
</protein>
<name>RL32_BACTN</name>
<organism>
    <name type="scientific">Bacteroides thetaiotaomicron (strain ATCC 29148 / DSM 2079 / JCM 5827 / CCUG 10774 / NCTC 10582 / VPI-5482 / E50)</name>
    <dbReference type="NCBI Taxonomy" id="226186"/>
    <lineage>
        <taxon>Bacteria</taxon>
        <taxon>Pseudomonadati</taxon>
        <taxon>Bacteroidota</taxon>
        <taxon>Bacteroidia</taxon>
        <taxon>Bacteroidales</taxon>
        <taxon>Bacteroidaceae</taxon>
        <taxon>Bacteroides</taxon>
    </lineage>
</organism>
<reference key="1">
    <citation type="journal article" date="2003" name="Science">
        <title>A genomic view of the human-Bacteroides thetaiotaomicron symbiosis.</title>
        <authorList>
            <person name="Xu J."/>
            <person name="Bjursell M.K."/>
            <person name="Himrod J."/>
            <person name="Deng S."/>
            <person name="Carmichael L.K."/>
            <person name="Chiang H.C."/>
            <person name="Hooper L.V."/>
            <person name="Gordon J.I."/>
        </authorList>
    </citation>
    <scope>NUCLEOTIDE SEQUENCE [LARGE SCALE GENOMIC DNA]</scope>
    <source>
        <strain>ATCC 29148 / DSM 2079 / JCM 5827 / CCUG 10774 / NCTC 10582 / VPI-5482 / E50</strain>
    </source>
</reference>
<proteinExistence type="inferred from homology"/>
<comment type="similarity">
    <text evidence="1">Belongs to the bacterial ribosomal protein bL32 family.</text>
</comment>
<sequence length="61" mass="6838">MAHPKRRQSKTRTAKRRTHDKAVAPTLAICPNCGEWHVYHTVCGACGYYRGKLAIEKEAAV</sequence>
<keyword id="KW-1185">Reference proteome</keyword>
<keyword id="KW-0687">Ribonucleoprotein</keyword>
<keyword id="KW-0689">Ribosomal protein</keyword>
<feature type="chain" id="PRO_0000172307" description="Large ribosomal subunit protein bL32">
    <location>
        <begin position="1"/>
        <end position="61"/>
    </location>
</feature>
<feature type="region of interest" description="Disordered" evidence="2">
    <location>
        <begin position="1"/>
        <end position="20"/>
    </location>
</feature>
<feature type="compositionally biased region" description="Basic residues" evidence="2">
    <location>
        <begin position="1"/>
        <end position="19"/>
    </location>
</feature>
<evidence type="ECO:0000255" key="1">
    <source>
        <dbReference type="HAMAP-Rule" id="MF_00340"/>
    </source>
</evidence>
<evidence type="ECO:0000256" key="2">
    <source>
        <dbReference type="SAM" id="MobiDB-lite"/>
    </source>
</evidence>
<evidence type="ECO:0000305" key="3"/>